<name>APAG_SHEB2</name>
<sequence>MSALDTSIRVEVKTEYIEQQSSPEDEKYLFSYTITIINLGEQAAKLETRHWIITDANGNTSEVQGAGVVGETPTIAPNTAYQYTSGTVLDTPLGIMHGTYGMVSESGEHFQATIRPFRLATPGLLH</sequence>
<organism>
    <name type="scientific">Shewanella baltica (strain OS223)</name>
    <dbReference type="NCBI Taxonomy" id="407976"/>
    <lineage>
        <taxon>Bacteria</taxon>
        <taxon>Pseudomonadati</taxon>
        <taxon>Pseudomonadota</taxon>
        <taxon>Gammaproteobacteria</taxon>
        <taxon>Alteromonadales</taxon>
        <taxon>Shewanellaceae</taxon>
        <taxon>Shewanella</taxon>
    </lineage>
</organism>
<gene>
    <name evidence="1" type="primary">apaG</name>
    <name type="ordered locus">Sbal223_3314</name>
</gene>
<reference key="1">
    <citation type="submission" date="2008-12" db="EMBL/GenBank/DDBJ databases">
        <title>Complete sequence of chromosome of Shewanella baltica OS223.</title>
        <authorList>
            <consortium name="US DOE Joint Genome Institute"/>
            <person name="Lucas S."/>
            <person name="Copeland A."/>
            <person name="Lapidus A."/>
            <person name="Glavina del Rio T."/>
            <person name="Dalin E."/>
            <person name="Tice H."/>
            <person name="Bruce D."/>
            <person name="Goodwin L."/>
            <person name="Pitluck S."/>
            <person name="Chertkov O."/>
            <person name="Meincke L."/>
            <person name="Brettin T."/>
            <person name="Detter J.C."/>
            <person name="Han C."/>
            <person name="Kuske C.R."/>
            <person name="Larimer F."/>
            <person name="Land M."/>
            <person name="Hauser L."/>
            <person name="Kyrpides N."/>
            <person name="Ovchinnikova G."/>
            <person name="Brettar I."/>
            <person name="Rodrigues J."/>
            <person name="Konstantinidis K."/>
            <person name="Tiedje J."/>
        </authorList>
    </citation>
    <scope>NUCLEOTIDE SEQUENCE [LARGE SCALE GENOMIC DNA]</scope>
    <source>
        <strain>OS223</strain>
    </source>
</reference>
<accession>B8EB36</accession>
<dbReference type="EMBL" id="CP001252">
    <property type="protein sequence ID" value="ACK47798.1"/>
    <property type="molecule type" value="Genomic_DNA"/>
</dbReference>
<dbReference type="RefSeq" id="WP_006080538.1">
    <property type="nucleotide sequence ID" value="NC_011663.1"/>
</dbReference>
<dbReference type="SMR" id="B8EB36"/>
<dbReference type="KEGG" id="sbp:Sbal223_3314"/>
<dbReference type="HOGENOM" id="CLU_128074_0_0_6"/>
<dbReference type="Proteomes" id="UP000002507">
    <property type="component" value="Chromosome"/>
</dbReference>
<dbReference type="GO" id="GO:0070987">
    <property type="term" value="P:error-free translesion synthesis"/>
    <property type="evidence" value="ECO:0007669"/>
    <property type="project" value="TreeGrafter"/>
</dbReference>
<dbReference type="Gene3D" id="2.60.40.1470">
    <property type="entry name" value="ApaG domain"/>
    <property type="match status" value="1"/>
</dbReference>
<dbReference type="HAMAP" id="MF_00791">
    <property type="entry name" value="ApaG"/>
    <property type="match status" value="1"/>
</dbReference>
<dbReference type="InterPro" id="IPR007474">
    <property type="entry name" value="ApaG_domain"/>
</dbReference>
<dbReference type="InterPro" id="IPR036767">
    <property type="entry name" value="ApaG_sf"/>
</dbReference>
<dbReference type="InterPro" id="IPR023065">
    <property type="entry name" value="Uncharacterised_ApaG"/>
</dbReference>
<dbReference type="NCBIfam" id="NF003967">
    <property type="entry name" value="PRK05461.1"/>
    <property type="match status" value="1"/>
</dbReference>
<dbReference type="PANTHER" id="PTHR14289">
    <property type="entry name" value="F-BOX ONLY PROTEIN 3"/>
    <property type="match status" value="1"/>
</dbReference>
<dbReference type="PANTHER" id="PTHR14289:SF16">
    <property type="entry name" value="POLYMERASE DELTA-INTERACTING PROTEIN 2"/>
    <property type="match status" value="1"/>
</dbReference>
<dbReference type="Pfam" id="PF04379">
    <property type="entry name" value="DUF525"/>
    <property type="match status" value="1"/>
</dbReference>
<dbReference type="SUPFAM" id="SSF110069">
    <property type="entry name" value="ApaG-like"/>
    <property type="match status" value="1"/>
</dbReference>
<dbReference type="PROSITE" id="PS51087">
    <property type="entry name" value="APAG"/>
    <property type="match status" value="1"/>
</dbReference>
<protein>
    <recommendedName>
        <fullName evidence="1">Protein ApaG</fullName>
    </recommendedName>
</protein>
<feature type="chain" id="PRO_1000148503" description="Protein ApaG">
    <location>
        <begin position="1"/>
        <end position="126"/>
    </location>
</feature>
<feature type="domain" description="ApaG" evidence="1">
    <location>
        <begin position="2"/>
        <end position="126"/>
    </location>
</feature>
<proteinExistence type="inferred from homology"/>
<evidence type="ECO:0000255" key="1">
    <source>
        <dbReference type="HAMAP-Rule" id="MF_00791"/>
    </source>
</evidence>